<gene>
    <name type="primary">gutB</name>
    <name type="ordered locus">BH0189</name>
</gene>
<dbReference type="EC" id="1.1.1.-" evidence="3"/>
<dbReference type="EC" id="1.1.1.14" evidence="3"/>
<dbReference type="EC" id="1.1.1.9" evidence="3"/>
<dbReference type="EMBL" id="AB011837">
    <property type="protein sequence ID" value="BAA75341.1"/>
    <property type="molecule type" value="Genomic_DNA"/>
</dbReference>
<dbReference type="EMBL" id="BA000004">
    <property type="protein sequence ID" value="BAB03908.1"/>
    <property type="molecule type" value="Genomic_DNA"/>
</dbReference>
<dbReference type="PIR" id="E83673">
    <property type="entry name" value="E83673"/>
</dbReference>
<dbReference type="RefSeq" id="WP_010896371.1">
    <property type="nucleotide sequence ID" value="NC_002570.2"/>
</dbReference>
<dbReference type="SMR" id="Q9Z9U1"/>
<dbReference type="STRING" id="272558.gene:10726029"/>
<dbReference type="KEGG" id="bha:BH0189"/>
<dbReference type="eggNOG" id="COG1063">
    <property type="taxonomic scope" value="Bacteria"/>
</dbReference>
<dbReference type="HOGENOM" id="CLU_026673_11_0_9"/>
<dbReference type="OrthoDB" id="9770238at2"/>
<dbReference type="Proteomes" id="UP000001258">
    <property type="component" value="Chromosome"/>
</dbReference>
<dbReference type="GO" id="GO:0046526">
    <property type="term" value="F:D-xylulose reductase activity"/>
    <property type="evidence" value="ECO:0007669"/>
    <property type="project" value="UniProtKB-EC"/>
</dbReference>
<dbReference type="GO" id="GO:0003939">
    <property type="term" value="F:L-iditol 2-dehydrogenase (NAD+) activity"/>
    <property type="evidence" value="ECO:0007669"/>
    <property type="project" value="UniProtKB-EC"/>
</dbReference>
<dbReference type="GO" id="GO:0008270">
    <property type="term" value="F:zinc ion binding"/>
    <property type="evidence" value="ECO:0007669"/>
    <property type="project" value="InterPro"/>
</dbReference>
<dbReference type="CDD" id="cd08258">
    <property type="entry name" value="Zn_ADH4"/>
    <property type="match status" value="1"/>
</dbReference>
<dbReference type="Gene3D" id="3.90.180.10">
    <property type="entry name" value="Medium-chain alcohol dehydrogenases, catalytic domain"/>
    <property type="match status" value="1"/>
</dbReference>
<dbReference type="Gene3D" id="3.40.50.720">
    <property type="entry name" value="NAD(P)-binding Rossmann-like Domain"/>
    <property type="match status" value="1"/>
</dbReference>
<dbReference type="InterPro" id="IPR013149">
    <property type="entry name" value="ADH-like_C"/>
</dbReference>
<dbReference type="InterPro" id="IPR013154">
    <property type="entry name" value="ADH-like_N"/>
</dbReference>
<dbReference type="InterPro" id="IPR002328">
    <property type="entry name" value="ADH_Zn_CS"/>
</dbReference>
<dbReference type="InterPro" id="IPR011032">
    <property type="entry name" value="GroES-like_sf"/>
</dbReference>
<dbReference type="InterPro" id="IPR036291">
    <property type="entry name" value="NAD(P)-bd_dom_sf"/>
</dbReference>
<dbReference type="InterPro" id="IPR020843">
    <property type="entry name" value="PKS_ER"/>
</dbReference>
<dbReference type="InterPro" id="IPR050129">
    <property type="entry name" value="Zn_alcohol_dh"/>
</dbReference>
<dbReference type="PANTHER" id="PTHR43401">
    <property type="entry name" value="L-THREONINE 3-DEHYDROGENASE"/>
    <property type="match status" value="1"/>
</dbReference>
<dbReference type="PANTHER" id="PTHR43401:SF2">
    <property type="entry name" value="L-THREONINE 3-DEHYDROGENASE"/>
    <property type="match status" value="1"/>
</dbReference>
<dbReference type="Pfam" id="PF08240">
    <property type="entry name" value="ADH_N"/>
    <property type="match status" value="1"/>
</dbReference>
<dbReference type="Pfam" id="PF00107">
    <property type="entry name" value="ADH_zinc_N"/>
    <property type="match status" value="1"/>
</dbReference>
<dbReference type="SMART" id="SM00829">
    <property type="entry name" value="PKS_ER"/>
    <property type="match status" value="1"/>
</dbReference>
<dbReference type="SUPFAM" id="SSF50129">
    <property type="entry name" value="GroES-like"/>
    <property type="match status" value="1"/>
</dbReference>
<dbReference type="SUPFAM" id="SSF51735">
    <property type="entry name" value="NAD(P)-binding Rossmann-fold domains"/>
    <property type="match status" value="1"/>
</dbReference>
<dbReference type="PROSITE" id="PS00059">
    <property type="entry name" value="ADH_ZINC"/>
    <property type="match status" value="1"/>
</dbReference>
<feature type="chain" id="PRO_0000160824" description="Sorbitol dehydrogenase">
    <location>
        <begin position="1"/>
        <end position="343"/>
    </location>
</feature>
<feature type="region of interest" description="Disordered" evidence="4">
    <location>
        <begin position="1"/>
        <end position="26"/>
    </location>
</feature>
<feature type="binding site" evidence="2">
    <location>
        <position position="39"/>
    </location>
    <ligand>
        <name>Zn(2+)</name>
        <dbReference type="ChEBI" id="CHEBI:29105"/>
        <note>catalytic</note>
    </ligand>
</feature>
<feature type="binding site" evidence="2">
    <location>
        <position position="60"/>
    </location>
    <ligand>
        <name>Zn(2+)</name>
        <dbReference type="ChEBI" id="CHEBI:29105"/>
        <note>catalytic</note>
    </ligand>
</feature>
<feature type="binding site" evidence="2">
    <location>
        <position position="61"/>
    </location>
    <ligand>
        <name>Zn(2+)</name>
        <dbReference type="ChEBI" id="CHEBI:29105"/>
        <note>catalytic</note>
    </ligand>
</feature>
<feature type="binding site" evidence="1">
    <location>
        <position position="146"/>
    </location>
    <ligand>
        <name>substrate</name>
    </ligand>
</feature>
<feature type="binding site" evidence="2">
    <location>
        <position position="174"/>
    </location>
    <ligand>
        <name>NAD(+)</name>
        <dbReference type="ChEBI" id="CHEBI:57540"/>
    </ligand>
</feature>
<feature type="binding site" evidence="2">
    <location>
        <position position="200"/>
    </location>
    <ligand>
        <name>NAD(+)</name>
        <dbReference type="ChEBI" id="CHEBI:57540"/>
    </ligand>
</feature>
<feature type="binding site" evidence="2">
    <location>
        <begin position="262"/>
        <end position="264"/>
    </location>
    <ligand>
        <name>NAD(+)</name>
        <dbReference type="ChEBI" id="CHEBI:57540"/>
    </ligand>
</feature>
<protein>
    <recommendedName>
        <fullName evidence="3">Sorbitol dehydrogenase</fullName>
        <shortName evidence="3">SDH</shortName>
        <ecNumber evidence="3">1.1.1.-</ecNumber>
    </recommendedName>
    <alternativeName>
        <fullName evidence="3">Glucitol dehydrogenase</fullName>
    </alternativeName>
    <alternativeName>
        <fullName evidence="3">L-iditol 2-dehydrogenase</fullName>
        <ecNumber evidence="3">1.1.1.14</ecNumber>
    </alternativeName>
    <alternativeName>
        <fullName evidence="3">Polyol dehydrogenase</fullName>
    </alternativeName>
    <alternativeName>
        <fullName evidence="3">Xylitol dehydrogenase</fullName>
        <ecNumber evidence="3">1.1.1.9</ecNumber>
    </alternativeName>
</protein>
<proteinExistence type="inferred from homology"/>
<accession>Q9Z9U1</accession>
<sequence>MKALVKTQHGTGHFAVQEKPEPTPGKHQVKIKVKYTGVCGSDIHTYEGHYPVAAPVTLGHEFSGEIVELGEGVTGFNVGDRVTSETTYSICGKCSYCTSGDYNLCSHRKGLGNQQDGSFAKYVIARQESLHHLPAGVDDRSAAMTEPLACTHHAIAKTSINKGDLVVVTGPGPIGLLAAQVAKSHGGTVIITGLSNDQVRLKKAKEVGIDYAIDTQEVDIKELVSELTDGYGADVVLECSGAVPAAKQGIDLLRKKGQYAQVGLFAQPEIQFNFEKIIQKEISVVGSRSQKPADWEPALSLLNEKKVNAKTLVTHEYTISEWDKAYHAIKSGEAIKVLLTPID</sequence>
<name>DHSO_HALH5</name>
<keyword id="KW-0479">Metal-binding</keyword>
<keyword id="KW-0520">NAD</keyword>
<keyword id="KW-0560">Oxidoreductase</keyword>
<keyword id="KW-1185">Reference proteome</keyword>
<keyword id="KW-0862">Zinc</keyword>
<comment type="function">
    <text evidence="3">Polyol dehydrogenase that catalyzes the NAD(+)-dependent oxidation of various sugar alcohols. Is active with D-sorbitol (D-glucitol), xylitol and L-iditol as substrates, leading to the C2-oxidized products D-fructose, D-xylulose and L-sorbose, respectively.</text>
</comment>
<comment type="catalytic activity">
    <reaction evidence="3">
        <text>keto-D-fructose + NADH + H(+) = D-sorbitol + NAD(+)</text>
        <dbReference type="Rhea" id="RHEA:33031"/>
        <dbReference type="ChEBI" id="CHEBI:15378"/>
        <dbReference type="ChEBI" id="CHEBI:17924"/>
        <dbReference type="ChEBI" id="CHEBI:48095"/>
        <dbReference type="ChEBI" id="CHEBI:57540"/>
        <dbReference type="ChEBI" id="CHEBI:57945"/>
    </reaction>
</comment>
<comment type="catalytic activity">
    <reaction evidence="3">
        <text>xylitol + NAD(+) = D-xylulose + NADH + H(+)</text>
        <dbReference type="Rhea" id="RHEA:20433"/>
        <dbReference type="ChEBI" id="CHEBI:15378"/>
        <dbReference type="ChEBI" id="CHEBI:17140"/>
        <dbReference type="ChEBI" id="CHEBI:17151"/>
        <dbReference type="ChEBI" id="CHEBI:57540"/>
        <dbReference type="ChEBI" id="CHEBI:57945"/>
        <dbReference type="EC" id="1.1.1.9"/>
    </reaction>
</comment>
<comment type="catalytic activity">
    <reaction evidence="3">
        <text>L-iditol + NAD(+) = keto-L-sorbose + NADH + H(+)</text>
        <dbReference type="Rhea" id="RHEA:10160"/>
        <dbReference type="ChEBI" id="CHEBI:13172"/>
        <dbReference type="ChEBI" id="CHEBI:15378"/>
        <dbReference type="ChEBI" id="CHEBI:18202"/>
        <dbReference type="ChEBI" id="CHEBI:57540"/>
        <dbReference type="ChEBI" id="CHEBI:57945"/>
        <dbReference type="EC" id="1.1.1.14"/>
    </reaction>
</comment>
<comment type="cofactor">
    <cofactor evidence="3">
        <name>Zn(2+)</name>
        <dbReference type="ChEBI" id="CHEBI:29105"/>
    </cofactor>
    <text evidence="3">Binds 1 Zn(2+) ion per subunit.</text>
</comment>
<comment type="subunit">
    <text evidence="3">Homotetramer.</text>
</comment>
<comment type="similarity">
    <text evidence="5">Belongs to the zinc-containing alcohol dehydrogenase family.</text>
</comment>
<organism>
    <name type="scientific">Halalkalibacterium halodurans (strain ATCC BAA-125 / DSM 18197 / FERM 7344 / JCM 9153 / C-125)</name>
    <name type="common">Bacillus halodurans</name>
    <dbReference type="NCBI Taxonomy" id="272558"/>
    <lineage>
        <taxon>Bacteria</taxon>
        <taxon>Bacillati</taxon>
        <taxon>Bacillota</taxon>
        <taxon>Bacilli</taxon>
        <taxon>Bacillales</taxon>
        <taxon>Bacillaceae</taxon>
        <taxon>Halalkalibacterium (ex Joshi et al. 2022)</taxon>
    </lineage>
</organism>
<reference key="1">
    <citation type="journal article" date="1999" name="Extremophiles">
        <title>Sequencing of three lambda clones from the genome of alkaliphilic Bacillus sp. strain C-125.</title>
        <authorList>
            <person name="Takami H."/>
            <person name="Nakasone K."/>
            <person name="Ogasawara N."/>
            <person name="Hirama C."/>
            <person name="Nakamura Y."/>
            <person name="Masui N."/>
            <person name="Fuji F."/>
            <person name="Takaki Y."/>
            <person name="Inoue A."/>
            <person name="Horikoshi K."/>
        </authorList>
    </citation>
    <scope>NUCLEOTIDE SEQUENCE [GENOMIC DNA]</scope>
    <source>
        <strain>ATCC BAA-125 / DSM 18197 / FERM 7344 / JCM 9153 / C-125</strain>
    </source>
</reference>
<reference key="2">
    <citation type="journal article" date="2000" name="Nucleic Acids Res.">
        <title>Complete genome sequence of the alkaliphilic bacterium Bacillus halodurans and genomic sequence comparison with Bacillus subtilis.</title>
        <authorList>
            <person name="Takami H."/>
            <person name="Nakasone K."/>
            <person name="Takaki Y."/>
            <person name="Maeno G."/>
            <person name="Sasaki R."/>
            <person name="Masui N."/>
            <person name="Fuji F."/>
            <person name="Hirama C."/>
            <person name="Nakamura Y."/>
            <person name="Ogasawara N."/>
            <person name="Kuhara S."/>
            <person name="Horikoshi K."/>
        </authorList>
    </citation>
    <scope>NUCLEOTIDE SEQUENCE [LARGE SCALE GENOMIC DNA]</scope>
    <source>
        <strain>ATCC BAA-125 / DSM 18197 / FERM 7344 / JCM 9153 / C-125</strain>
    </source>
</reference>
<evidence type="ECO:0000250" key="1">
    <source>
        <dbReference type="UniProtKB" id="P07846"/>
    </source>
</evidence>
<evidence type="ECO:0000250" key="2">
    <source>
        <dbReference type="UniProtKB" id="Q00796"/>
    </source>
</evidence>
<evidence type="ECO:0000250" key="3">
    <source>
        <dbReference type="UniProtKB" id="Q06004"/>
    </source>
</evidence>
<evidence type="ECO:0000256" key="4">
    <source>
        <dbReference type="SAM" id="MobiDB-lite"/>
    </source>
</evidence>
<evidence type="ECO:0000305" key="5"/>